<name>PDXT_NOCSJ</name>
<proteinExistence type="inferred from homology"/>
<feature type="chain" id="PRO_0000293010" description="Pyridoxal 5'-phosphate synthase subunit PdxT">
    <location>
        <begin position="1"/>
        <end position="201"/>
    </location>
</feature>
<feature type="active site" description="Nucleophile" evidence="1">
    <location>
        <position position="82"/>
    </location>
</feature>
<feature type="active site" description="Charge relay system" evidence="1">
    <location>
        <position position="180"/>
    </location>
</feature>
<feature type="active site" description="Charge relay system" evidence="1">
    <location>
        <position position="182"/>
    </location>
</feature>
<feature type="binding site" evidence="1">
    <location>
        <begin position="50"/>
        <end position="52"/>
    </location>
    <ligand>
        <name>L-glutamine</name>
        <dbReference type="ChEBI" id="CHEBI:58359"/>
    </ligand>
</feature>
<feature type="binding site" evidence="1">
    <location>
        <position position="111"/>
    </location>
    <ligand>
        <name>L-glutamine</name>
        <dbReference type="ChEBI" id="CHEBI:58359"/>
    </ligand>
</feature>
<feature type="binding site" evidence="1">
    <location>
        <begin position="139"/>
        <end position="140"/>
    </location>
    <ligand>
        <name>L-glutamine</name>
        <dbReference type="ChEBI" id="CHEBI:58359"/>
    </ligand>
</feature>
<comment type="function">
    <text evidence="1">Catalyzes the hydrolysis of glutamine to glutamate and ammonia as part of the biosynthesis of pyridoxal 5'-phosphate. The resulting ammonia molecule is channeled to the active site of PdxS.</text>
</comment>
<comment type="catalytic activity">
    <reaction evidence="1">
        <text>aldehydo-D-ribose 5-phosphate + D-glyceraldehyde 3-phosphate + L-glutamine = pyridoxal 5'-phosphate + L-glutamate + phosphate + 3 H2O + H(+)</text>
        <dbReference type="Rhea" id="RHEA:31507"/>
        <dbReference type="ChEBI" id="CHEBI:15377"/>
        <dbReference type="ChEBI" id="CHEBI:15378"/>
        <dbReference type="ChEBI" id="CHEBI:29985"/>
        <dbReference type="ChEBI" id="CHEBI:43474"/>
        <dbReference type="ChEBI" id="CHEBI:58273"/>
        <dbReference type="ChEBI" id="CHEBI:58359"/>
        <dbReference type="ChEBI" id="CHEBI:59776"/>
        <dbReference type="ChEBI" id="CHEBI:597326"/>
        <dbReference type="EC" id="4.3.3.6"/>
    </reaction>
</comment>
<comment type="catalytic activity">
    <reaction evidence="1">
        <text>L-glutamine + H2O = L-glutamate + NH4(+)</text>
        <dbReference type="Rhea" id="RHEA:15889"/>
        <dbReference type="ChEBI" id="CHEBI:15377"/>
        <dbReference type="ChEBI" id="CHEBI:28938"/>
        <dbReference type="ChEBI" id="CHEBI:29985"/>
        <dbReference type="ChEBI" id="CHEBI:58359"/>
        <dbReference type="EC" id="3.5.1.2"/>
    </reaction>
</comment>
<comment type="pathway">
    <text evidence="1">Cofactor biosynthesis; pyridoxal 5'-phosphate biosynthesis.</text>
</comment>
<comment type="subunit">
    <text evidence="1">In the presence of PdxS, forms a dodecamer of heterodimers. Only shows activity in the heterodimer.</text>
</comment>
<comment type="similarity">
    <text evidence="1">Belongs to the glutaminase PdxT/SNO family.</text>
</comment>
<dbReference type="EC" id="4.3.3.6" evidence="1"/>
<dbReference type="EC" id="3.5.1.2" evidence="1"/>
<dbReference type="EMBL" id="CP000509">
    <property type="protein sequence ID" value="ABL81887.1"/>
    <property type="molecule type" value="Genomic_DNA"/>
</dbReference>
<dbReference type="RefSeq" id="WP_011755828.1">
    <property type="nucleotide sequence ID" value="NC_008699.1"/>
</dbReference>
<dbReference type="SMR" id="A1SJA2"/>
<dbReference type="STRING" id="196162.Noca_2382"/>
<dbReference type="KEGG" id="nca:Noca_2382"/>
<dbReference type="eggNOG" id="COG0311">
    <property type="taxonomic scope" value="Bacteria"/>
</dbReference>
<dbReference type="HOGENOM" id="CLU_069674_2_0_11"/>
<dbReference type="OrthoDB" id="9810320at2"/>
<dbReference type="UniPathway" id="UPA00245"/>
<dbReference type="Proteomes" id="UP000000640">
    <property type="component" value="Chromosome"/>
</dbReference>
<dbReference type="GO" id="GO:0005829">
    <property type="term" value="C:cytosol"/>
    <property type="evidence" value="ECO:0007669"/>
    <property type="project" value="TreeGrafter"/>
</dbReference>
<dbReference type="GO" id="GO:1903600">
    <property type="term" value="C:glutaminase complex"/>
    <property type="evidence" value="ECO:0007669"/>
    <property type="project" value="TreeGrafter"/>
</dbReference>
<dbReference type="GO" id="GO:0004359">
    <property type="term" value="F:glutaminase activity"/>
    <property type="evidence" value="ECO:0007669"/>
    <property type="project" value="UniProtKB-UniRule"/>
</dbReference>
<dbReference type="GO" id="GO:0036381">
    <property type="term" value="F:pyridoxal 5'-phosphate synthase (glutamine hydrolysing) activity"/>
    <property type="evidence" value="ECO:0007669"/>
    <property type="project" value="UniProtKB-UniRule"/>
</dbReference>
<dbReference type="GO" id="GO:0006543">
    <property type="term" value="P:glutamine catabolic process"/>
    <property type="evidence" value="ECO:0007669"/>
    <property type="project" value="UniProtKB-UniRule"/>
</dbReference>
<dbReference type="GO" id="GO:0042823">
    <property type="term" value="P:pyridoxal phosphate biosynthetic process"/>
    <property type="evidence" value="ECO:0007669"/>
    <property type="project" value="UniProtKB-UniRule"/>
</dbReference>
<dbReference type="GO" id="GO:0008614">
    <property type="term" value="P:pyridoxine metabolic process"/>
    <property type="evidence" value="ECO:0007669"/>
    <property type="project" value="TreeGrafter"/>
</dbReference>
<dbReference type="CDD" id="cd01749">
    <property type="entry name" value="GATase1_PB"/>
    <property type="match status" value="1"/>
</dbReference>
<dbReference type="FunFam" id="3.40.50.880:FF:000010">
    <property type="entry name" value="uncharacterized protein LOC100176842 isoform X2"/>
    <property type="match status" value="1"/>
</dbReference>
<dbReference type="Gene3D" id="3.40.50.880">
    <property type="match status" value="1"/>
</dbReference>
<dbReference type="HAMAP" id="MF_01615">
    <property type="entry name" value="PdxT"/>
    <property type="match status" value="1"/>
</dbReference>
<dbReference type="InterPro" id="IPR029062">
    <property type="entry name" value="Class_I_gatase-like"/>
</dbReference>
<dbReference type="InterPro" id="IPR002161">
    <property type="entry name" value="PdxT/SNO"/>
</dbReference>
<dbReference type="InterPro" id="IPR021196">
    <property type="entry name" value="PdxT/SNO_CS"/>
</dbReference>
<dbReference type="NCBIfam" id="TIGR03800">
    <property type="entry name" value="PLP_synth_Pdx2"/>
    <property type="match status" value="1"/>
</dbReference>
<dbReference type="PANTHER" id="PTHR31559">
    <property type="entry name" value="PYRIDOXAL 5'-PHOSPHATE SYNTHASE SUBUNIT SNO"/>
    <property type="match status" value="1"/>
</dbReference>
<dbReference type="PANTHER" id="PTHR31559:SF0">
    <property type="entry name" value="PYRIDOXAL 5'-PHOSPHATE SYNTHASE SUBUNIT SNO1-RELATED"/>
    <property type="match status" value="1"/>
</dbReference>
<dbReference type="Pfam" id="PF01174">
    <property type="entry name" value="SNO"/>
    <property type="match status" value="1"/>
</dbReference>
<dbReference type="PIRSF" id="PIRSF005639">
    <property type="entry name" value="Glut_amidoT_SNO"/>
    <property type="match status" value="1"/>
</dbReference>
<dbReference type="SUPFAM" id="SSF52317">
    <property type="entry name" value="Class I glutamine amidotransferase-like"/>
    <property type="match status" value="1"/>
</dbReference>
<dbReference type="PROSITE" id="PS01236">
    <property type="entry name" value="PDXT_SNO_1"/>
    <property type="match status" value="1"/>
</dbReference>
<dbReference type="PROSITE" id="PS51130">
    <property type="entry name" value="PDXT_SNO_2"/>
    <property type="match status" value="1"/>
</dbReference>
<accession>A1SJA2</accession>
<sequence>MTTAPTIGVFALQGDVREHLGMLTGLGVEAIAVRRPAELDVCAGLVIPGGESTTMAKLARTFDLFEPIRQRIKEGMPAFGTCAGMIMLADRIEDGTRDQETLGGLDITVRRNAFGRQVESFEGEIDVVGLDAPLHAVFIRAPWVEAVGDSVEVLARVEQGEAAGRIVAVRQGSLMATSFHPEVGGDSRVHRLFVDLVTEER</sequence>
<evidence type="ECO:0000255" key="1">
    <source>
        <dbReference type="HAMAP-Rule" id="MF_01615"/>
    </source>
</evidence>
<reference key="1">
    <citation type="submission" date="2006-12" db="EMBL/GenBank/DDBJ databases">
        <title>Complete sequence of chromosome 1 of Nocardioides sp. JS614.</title>
        <authorList>
            <person name="Copeland A."/>
            <person name="Lucas S."/>
            <person name="Lapidus A."/>
            <person name="Barry K."/>
            <person name="Detter J.C."/>
            <person name="Glavina del Rio T."/>
            <person name="Hammon N."/>
            <person name="Israni S."/>
            <person name="Dalin E."/>
            <person name="Tice H."/>
            <person name="Pitluck S."/>
            <person name="Thompson L.S."/>
            <person name="Brettin T."/>
            <person name="Bruce D."/>
            <person name="Han C."/>
            <person name="Tapia R."/>
            <person name="Schmutz J."/>
            <person name="Larimer F."/>
            <person name="Land M."/>
            <person name="Hauser L."/>
            <person name="Kyrpides N."/>
            <person name="Kim E."/>
            <person name="Mattes T."/>
            <person name="Gossett J."/>
            <person name="Richardson P."/>
        </authorList>
    </citation>
    <scope>NUCLEOTIDE SEQUENCE [LARGE SCALE GENOMIC DNA]</scope>
    <source>
        <strain>ATCC BAA-499 / JS614</strain>
    </source>
</reference>
<keyword id="KW-0315">Glutamine amidotransferase</keyword>
<keyword id="KW-0378">Hydrolase</keyword>
<keyword id="KW-0456">Lyase</keyword>
<keyword id="KW-0663">Pyridoxal phosphate</keyword>
<keyword id="KW-1185">Reference proteome</keyword>
<organism>
    <name type="scientific">Nocardioides sp. (strain ATCC BAA-499 / JS614)</name>
    <dbReference type="NCBI Taxonomy" id="196162"/>
    <lineage>
        <taxon>Bacteria</taxon>
        <taxon>Bacillati</taxon>
        <taxon>Actinomycetota</taxon>
        <taxon>Actinomycetes</taxon>
        <taxon>Propionibacteriales</taxon>
        <taxon>Nocardioidaceae</taxon>
        <taxon>Nocardioides</taxon>
    </lineage>
</organism>
<gene>
    <name evidence="1" type="primary">pdxT</name>
    <name type="ordered locus">Noca_2382</name>
</gene>
<protein>
    <recommendedName>
        <fullName evidence="1">Pyridoxal 5'-phosphate synthase subunit PdxT</fullName>
        <ecNumber evidence="1">4.3.3.6</ecNumber>
    </recommendedName>
    <alternativeName>
        <fullName evidence="1">Pdx2</fullName>
    </alternativeName>
    <alternativeName>
        <fullName evidence="1">Pyridoxal 5'-phosphate synthase glutaminase subunit</fullName>
        <ecNumber evidence="1">3.5.1.2</ecNumber>
    </alternativeName>
</protein>